<reference key="1">
    <citation type="journal article" date="2018" name="Planta">
        <title>Biochemical characterization of rice xylan O-acetyltransferases.</title>
        <authorList>
            <person name="Zhong R."/>
            <person name="Cui D."/>
            <person name="Dasher R.L."/>
            <person name="Ye Z.H."/>
        </authorList>
    </citation>
    <scope>NUCLEOTIDE SEQUENCE [MRNA]</scope>
    <scope>FUNCTION</scope>
    <scope>CATALYTIC ACTIVITY</scope>
    <scope>BIOPHYSICOCHEMICAL PROPERTIES</scope>
    <scope>TISSUE SPECIFICITY</scope>
</reference>
<reference key="2">
    <citation type="journal article" date="2005" name="BMC Biol.">
        <title>The sequence of rice chromosomes 11 and 12, rich in disease resistance genes and recent gene duplications.</title>
        <authorList>
            <consortium name="The rice chromosomes 11 and 12 sequencing consortia"/>
        </authorList>
    </citation>
    <scope>NUCLEOTIDE SEQUENCE [LARGE SCALE GENOMIC DNA]</scope>
    <source>
        <strain>cv. Nipponbare</strain>
    </source>
</reference>
<reference key="3">
    <citation type="journal article" date="2005" name="Nature">
        <title>The map-based sequence of the rice genome.</title>
        <authorList>
            <consortium name="International rice genome sequencing project (IRGSP)"/>
        </authorList>
    </citation>
    <scope>NUCLEOTIDE SEQUENCE [LARGE SCALE GENOMIC DNA]</scope>
    <source>
        <strain>cv. Nipponbare</strain>
    </source>
</reference>
<reference key="4">
    <citation type="journal article" date="2008" name="Nucleic Acids Res.">
        <title>The rice annotation project database (RAP-DB): 2008 update.</title>
        <authorList>
            <consortium name="The rice annotation project (RAP)"/>
        </authorList>
    </citation>
    <scope>GENOME REANNOTATION</scope>
    <source>
        <strain>cv. Nipponbare</strain>
    </source>
</reference>
<reference key="5">
    <citation type="journal article" date="2013" name="Rice">
        <title>Improvement of the Oryza sativa Nipponbare reference genome using next generation sequence and optical map data.</title>
        <authorList>
            <person name="Kawahara Y."/>
            <person name="de la Bastide M."/>
            <person name="Hamilton J.P."/>
            <person name="Kanamori H."/>
            <person name="McCombie W.R."/>
            <person name="Ouyang S."/>
            <person name="Schwartz D.C."/>
            <person name="Tanaka T."/>
            <person name="Wu J."/>
            <person name="Zhou S."/>
            <person name="Childs K.L."/>
            <person name="Davidson R.M."/>
            <person name="Lin H."/>
            <person name="Quesada-Ocampo L."/>
            <person name="Vaillancourt B."/>
            <person name="Sakai H."/>
            <person name="Lee S.S."/>
            <person name="Kim J."/>
            <person name="Numa H."/>
            <person name="Itoh T."/>
            <person name="Buell C.R."/>
            <person name="Matsumoto T."/>
        </authorList>
    </citation>
    <scope>GENOME REANNOTATION</scope>
    <source>
        <strain>cv. Nipponbare</strain>
    </source>
</reference>
<reference key="6">
    <citation type="journal article" date="2005" name="PLoS Biol.">
        <title>The genomes of Oryza sativa: a history of duplications.</title>
        <authorList>
            <person name="Yu J."/>
            <person name="Wang J."/>
            <person name="Lin W."/>
            <person name="Li S."/>
            <person name="Li H."/>
            <person name="Zhou J."/>
            <person name="Ni P."/>
            <person name="Dong W."/>
            <person name="Hu S."/>
            <person name="Zeng C."/>
            <person name="Zhang J."/>
            <person name="Zhang Y."/>
            <person name="Li R."/>
            <person name="Xu Z."/>
            <person name="Li S."/>
            <person name="Li X."/>
            <person name="Zheng H."/>
            <person name="Cong L."/>
            <person name="Lin L."/>
            <person name="Yin J."/>
            <person name="Geng J."/>
            <person name="Li G."/>
            <person name="Shi J."/>
            <person name="Liu J."/>
            <person name="Lv H."/>
            <person name="Li J."/>
            <person name="Wang J."/>
            <person name="Deng Y."/>
            <person name="Ran L."/>
            <person name="Shi X."/>
            <person name="Wang X."/>
            <person name="Wu Q."/>
            <person name="Li C."/>
            <person name="Ren X."/>
            <person name="Wang J."/>
            <person name="Wang X."/>
            <person name="Li D."/>
            <person name="Liu D."/>
            <person name="Zhang X."/>
            <person name="Ji Z."/>
            <person name="Zhao W."/>
            <person name="Sun Y."/>
            <person name="Zhang Z."/>
            <person name="Bao J."/>
            <person name="Han Y."/>
            <person name="Dong L."/>
            <person name="Ji J."/>
            <person name="Chen P."/>
            <person name="Wu S."/>
            <person name="Liu J."/>
            <person name="Xiao Y."/>
            <person name="Bu D."/>
            <person name="Tan J."/>
            <person name="Yang L."/>
            <person name="Ye C."/>
            <person name="Zhang J."/>
            <person name="Xu J."/>
            <person name="Zhou Y."/>
            <person name="Yu Y."/>
            <person name="Zhang B."/>
            <person name="Zhuang S."/>
            <person name="Wei H."/>
            <person name="Liu B."/>
            <person name="Lei M."/>
            <person name="Yu H."/>
            <person name="Li Y."/>
            <person name="Xu H."/>
            <person name="Wei S."/>
            <person name="He X."/>
            <person name="Fang L."/>
            <person name="Zhang Z."/>
            <person name="Zhang Y."/>
            <person name="Huang X."/>
            <person name="Su Z."/>
            <person name="Tong W."/>
            <person name="Li J."/>
            <person name="Tong Z."/>
            <person name="Li S."/>
            <person name="Ye J."/>
            <person name="Wang L."/>
            <person name="Fang L."/>
            <person name="Lei T."/>
            <person name="Chen C.-S."/>
            <person name="Chen H.-C."/>
            <person name="Xu Z."/>
            <person name="Li H."/>
            <person name="Huang H."/>
            <person name="Zhang F."/>
            <person name="Xu H."/>
            <person name="Li N."/>
            <person name="Zhao C."/>
            <person name="Li S."/>
            <person name="Dong L."/>
            <person name="Huang Y."/>
            <person name="Li L."/>
            <person name="Xi Y."/>
            <person name="Qi Q."/>
            <person name="Li W."/>
            <person name="Zhang B."/>
            <person name="Hu W."/>
            <person name="Zhang Y."/>
            <person name="Tian X."/>
            <person name="Jiao Y."/>
            <person name="Liang X."/>
            <person name="Jin J."/>
            <person name="Gao L."/>
            <person name="Zheng W."/>
            <person name="Hao B."/>
            <person name="Liu S.-M."/>
            <person name="Wang W."/>
            <person name="Yuan L."/>
            <person name="Cao M."/>
            <person name="McDermott J."/>
            <person name="Samudrala R."/>
            <person name="Wang J."/>
            <person name="Wong G.K.-S."/>
            <person name="Yang H."/>
        </authorList>
    </citation>
    <scope>NUCLEOTIDE SEQUENCE [LARGE SCALE GENOMIC DNA]</scope>
    <source>
        <strain>cv. Nipponbare</strain>
    </source>
</reference>
<reference key="7">
    <citation type="journal article" date="2003" name="Science">
        <title>Collection, mapping, and annotation of over 28,000 cDNA clones from japonica rice.</title>
        <authorList>
            <consortium name="The rice full-length cDNA consortium"/>
        </authorList>
    </citation>
    <scope>NUCLEOTIDE SEQUENCE [LARGE SCALE MRNA]</scope>
    <source>
        <strain>cv. Nipponbare</strain>
    </source>
</reference>
<reference key="8">
    <citation type="journal article" date="2017" name="Plant Physiol.">
        <title>Two trichome birefringence-like proteins mediate xylan acetylation, which is essential for leaf blight resistance in rice.</title>
        <authorList>
            <person name="Gao Y."/>
            <person name="He C."/>
            <person name="Zhang D."/>
            <person name="Liu X."/>
            <person name="Xu Z."/>
            <person name="Tian Y."/>
            <person name="Liu X.H."/>
            <person name="Zang S."/>
            <person name="Pauly M."/>
            <person name="Zhou Y."/>
            <person name="Zhang B."/>
        </authorList>
    </citation>
    <scope>GENE FAMILY</scope>
    <scope>NOMENCLATURE</scope>
</reference>
<feature type="chain" id="PRO_0000454027" description="Xylan O-acetyltransferase 3">
    <location>
        <begin position="1"/>
        <end position="455"/>
    </location>
</feature>
<feature type="topological domain" description="Cytoplasmic" evidence="9">
    <location>
        <begin position="1"/>
        <end position="42"/>
    </location>
</feature>
<feature type="transmembrane region" description="Helical; Signal-anchor for type II membrane protein" evidence="3">
    <location>
        <begin position="43"/>
        <end position="59"/>
    </location>
</feature>
<feature type="topological domain" description="Lumenal" evidence="9">
    <location>
        <begin position="60"/>
        <end position="455"/>
    </location>
</feature>
<feature type="region of interest" description="Disordered" evidence="5">
    <location>
        <begin position="1"/>
        <end position="32"/>
    </location>
</feature>
<feature type="short sequence motif" description="GDS motif" evidence="10">
    <location>
        <begin position="170"/>
        <end position="172"/>
    </location>
</feature>
<feature type="short sequence motif" description="DXXH motif" evidence="10">
    <location>
        <begin position="418"/>
        <end position="421"/>
    </location>
</feature>
<feature type="compositionally biased region" description="Low complexity" evidence="5">
    <location>
        <begin position="1"/>
        <end position="15"/>
    </location>
</feature>
<feature type="compositionally biased region" description="Pro residues" evidence="5">
    <location>
        <begin position="16"/>
        <end position="28"/>
    </location>
</feature>
<feature type="active site" description="Nucleophile" evidence="2">
    <location>
        <position position="172"/>
    </location>
</feature>
<feature type="active site" description="Proton donor" evidence="2">
    <location>
        <position position="418"/>
    </location>
</feature>
<feature type="active site" description="Proton acceptor" evidence="2">
    <location>
        <position position="421"/>
    </location>
</feature>
<feature type="glycosylation site" description="N-linked (GlcNAc...) asparagine" evidence="4">
    <location>
        <position position="82"/>
    </location>
</feature>
<feature type="glycosylation site" description="N-linked (GlcNAc...) asparagine" evidence="4">
    <location>
        <position position="107"/>
    </location>
</feature>
<feature type="glycosylation site" description="N-linked (GlcNAc...) asparagine" evidence="4">
    <location>
        <position position="146"/>
    </location>
</feature>
<feature type="glycosylation site" description="N-linked (GlcNAc...) asparagine" evidence="4">
    <location>
        <position position="278"/>
    </location>
</feature>
<feature type="glycosylation site" description="N-linked (GlcNAc...) asparagine" evidence="4">
    <location>
        <position position="348"/>
    </location>
</feature>
<feature type="disulfide bond" evidence="2">
    <location>
        <begin position="96"/>
        <end position="147"/>
    </location>
</feature>
<feature type="disulfide bond" evidence="2">
    <location>
        <begin position="118"/>
        <end position="183"/>
    </location>
</feature>
<feature type="disulfide bond" evidence="2">
    <location>
        <begin position="127"/>
        <end position="423"/>
    </location>
</feature>
<feature type="disulfide bond" evidence="2">
    <location>
        <begin position="339"/>
        <end position="419"/>
    </location>
</feature>
<feature type="sequence conflict" description="In Ref. 6; EEE52598." evidence="9" ref="6">
    <original>THPS</original>
    <variation>PHPP</variation>
    <location>
        <begin position="448"/>
        <end position="451"/>
    </location>
</feature>
<accession>Q2QYW3</accession>
<accession>B9GBE1</accession>
<accession>Q0IQR9</accession>
<name>XOAT3_ORYSJ</name>
<sequence length="455" mass="52585">MSKPQQQSPPSTTTTSPPPPPPSTPPPASSSRSLLSALRRSPVTTLVAAFFLLALFMYGEDVRTLAELSIDDYLYPDADFYNVSALPPLLLPPPTCDLSRGRWVFDNTSLPAYREKECTFLTKQVSCLANGRPDDLWQYWRWQPNNCSLPTFDARRFMEKMRGKRMMFVGDSLNRNQWESLVCLVQPILSKGRKKIVKRGSFNIFYAKEYRATLEFYWAPFLVESNSDNPNFHHIDQRIISPERIESHANNWKDVDYLIFNTYIWWMNNEDIKVRRPNSTSWSDHDEVPRIETYGRVFKTWSTWLEQNVDPARTSVFFMTISPLHNSPAQWGNPNGIKCVKETLPVLNYTKPLDLNHDMRMYDLVAKVAKNMKNVPVSLIDITRMSDYRKDAHTSLYSIRQGKLLTPEQKADPQKYADCIHWCLPGVPDVWNQILYTRILSKSSPPSTHPSLPPQ</sequence>
<gene>
    <name evidence="8" type="primary">XOAT3</name>
    <name evidence="7" type="synonym">TBL9</name>
    <name evidence="12" type="ordered locus">Os12g0104700</name>
    <name evidence="11" type="ordered locus">LOC_Os12g01380</name>
    <name evidence="13" type="ORF">OsJ_34909</name>
</gene>
<organism>
    <name type="scientific">Oryza sativa subsp. japonica</name>
    <name type="common">Rice</name>
    <dbReference type="NCBI Taxonomy" id="39947"/>
    <lineage>
        <taxon>Eukaryota</taxon>
        <taxon>Viridiplantae</taxon>
        <taxon>Streptophyta</taxon>
        <taxon>Embryophyta</taxon>
        <taxon>Tracheophyta</taxon>
        <taxon>Spermatophyta</taxon>
        <taxon>Magnoliopsida</taxon>
        <taxon>Liliopsida</taxon>
        <taxon>Poales</taxon>
        <taxon>Poaceae</taxon>
        <taxon>BOP clade</taxon>
        <taxon>Oryzoideae</taxon>
        <taxon>Oryzeae</taxon>
        <taxon>Oryzinae</taxon>
        <taxon>Oryza</taxon>
        <taxon>Oryza sativa</taxon>
    </lineage>
</organism>
<protein>
    <recommendedName>
        <fullName evidence="8">Xylan O-acetyltransferase 3</fullName>
        <ecNumber evidence="6">2.3.1.-</ecNumber>
    </recommendedName>
    <alternativeName>
        <fullName evidence="7">Protein trichome birefringence-like 9</fullName>
        <shortName evidence="7">OsTBL9</shortName>
    </alternativeName>
</protein>
<proteinExistence type="evidence at protein level"/>
<keyword id="KW-1015">Disulfide bond</keyword>
<keyword id="KW-0325">Glycoprotein</keyword>
<keyword id="KW-0333">Golgi apparatus</keyword>
<keyword id="KW-0472">Membrane</keyword>
<keyword id="KW-1185">Reference proteome</keyword>
<keyword id="KW-0735">Signal-anchor</keyword>
<keyword id="KW-0808">Transferase</keyword>
<keyword id="KW-0812">Transmembrane</keyword>
<keyword id="KW-1133">Transmembrane helix</keyword>
<dbReference type="EC" id="2.3.1.-" evidence="6"/>
<dbReference type="EMBL" id="MH037017">
    <property type="protein sequence ID" value="AVR54507.1"/>
    <property type="molecule type" value="mRNA"/>
</dbReference>
<dbReference type="EMBL" id="DP000011">
    <property type="protein sequence ID" value="ABA95597.1"/>
    <property type="molecule type" value="Genomic_DNA"/>
</dbReference>
<dbReference type="EMBL" id="AP008218">
    <property type="protein sequence ID" value="BAF28946.1"/>
    <property type="molecule type" value="Genomic_DNA"/>
</dbReference>
<dbReference type="EMBL" id="AP014968">
    <property type="protein sequence ID" value="BAT15478.1"/>
    <property type="molecule type" value="Genomic_DNA"/>
</dbReference>
<dbReference type="EMBL" id="CM000149">
    <property type="protein sequence ID" value="EEE52598.1"/>
    <property type="molecule type" value="Genomic_DNA"/>
</dbReference>
<dbReference type="EMBL" id="AK067342">
    <property type="protein sequence ID" value="BAG90376.1"/>
    <property type="molecule type" value="mRNA"/>
</dbReference>
<dbReference type="SMR" id="Q2QYW3"/>
<dbReference type="FunCoup" id="Q2QYW3">
    <property type="interactions" value="5"/>
</dbReference>
<dbReference type="GlyCosmos" id="Q2QYW3">
    <property type="glycosylation" value="5 sites, No reported glycans"/>
</dbReference>
<dbReference type="PaxDb" id="39947-Q2QYW3"/>
<dbReference type="EnsemblPlants" id="Os12t0104700-01">
    <property type="protein sequence ID" value="Os12t0104700-01"/>
    <property type="gene ID" value="Os12g0104700"/>
</dbReference>
<dbReference type="GeneID" id="4351254"/>
<dbReference type="Gramene" id="Os12t0104700-01">
    <property type="protein sequence ID" value="Os12t0104700-01"/>
    <property type="gene ID" value="Os12g0104700"/>
</dbReference>
<dbReference type="KEGG" id="dosa:Os12g0104700"/>
<dbReference type="KEGG" id="osa:4351254"/>
<dbReference type="eggNOG" id="ENOG502SJAQ">
    <property type="taxonomic scope" value="Eukaryota"/>
</dbReference>
<dbReference type="HOGENOM" id="CLU_020953_3_0_1"/>
<dbReference type="InParanoid" id="Q2QYW3"/>
<dbReference type="OMA" id="PRMEAYG"/>
<dbReference type="OrthoDB" id="1932925at2759"/>
<dbReference type="Proteomes" id="UP000000763">
    <property type="component" value="Chromosome 12"/>
</dbReference>
<dbReference type="Proteomes" id="UP000007752">
    <property type="component" value="Chromosome 12"/>
</dbReference>
<dbReference type="Proteomes" id="UP000059680">
    <property type="component" value="Chromosome 12"/>
</dbReference>
<dbReference type="GO" id="GO:0005794">
    <property type="term" value="C:Golgi apparatus"/>
    <property type="evidence" value="ECO:0000318"/>
    <property type="project" value="GO_Central"/>
</dbReference>
<dbReference type="GO" id="GO:0000139">
    <property type="term" value="C:Golgi membrane"/>
    <property type="evidence" value="ECO:0000250"/>
    <property type="project" value="UniProtKB"/>
</dbReference>
<dbReference type="GO" id="GO:0016413">
    <property type="term" value="F:O-acetyltransferase activity"/>
    <property type="evidence" value="ECO:0000318"/>
    <property type="project" value="GO_Central"/>
</dbReference>
<dbReference type="GO" id="GO:1990538">
    <property type="term" value="F:xylan O-acetyltransferase activity"/>
    <property type="evidence" value="ECO:0000314"/>
    <property type="project" value="UniProtKB"/>
</dbReference>
<dbReference type="GO" id="GO:1990937">
    <property type="term" value="P:xylan acetylation"/>
    <property type="evidence" value="ECO:0000314"/>
    <property type="project" value="UniProtKB"/>
</dbReference>
<dbReference type="InterPro" id="IPR029962">
    <property type="entry name" value="TBL"/>
</dbReference>
<dbReference type="InterPro" id="IPR026057">
    <property type="entry name" value="TBL_C"/>
</dbReference>
<dbReference type="InterPro" id="IPR025846">
    <property type="entry name" value="TBL_N"/>
</dbReference>
<dbReference type="PANTHER" id="PTHR32285">
    <property type="entry name" value="PROTEIN TRICHOME BIREFRINGENCE-LIKE 9-RELATED"/>
    <property type="match status" value="1"/>
</dbReference>
<dbReference type="PANTHER" id="PTHR32285:SF285">
    <property type="entry name" value="XYLAN O-ACETYLTRANSFERASE 3"/>
    <property type="match status" value="1"/>
</dbReference>
<dbReference type="Pfam" id="PF13839">
    <property type="entry name" value="PC-Esterase"/>
    <property type="match status" value="1"/>
</dbReference>
<dbReference type="Pfam" id="PF14416">
    <property type="entry name" value="PMR5N"/>
    <property type="match status" value="1"/>
</dbReference>
<comment type="function">
    <text evidence="2 6">Xylan acetyltransferase required for 2-O- and 3-O-monoacetylation of xylosyl residues in xylan (PubMed:29569182). Catalyzes the 2-O-acetylation of xylan, followed by nonenzymatic acetyl migration to the O-3 position, resulting in products that are monoacetylated at both O-2 and O-3 positions (By similarity).</text>
</comment>
<comment type="biophysicochemical properties">
    <kinetics>
        <KM evidence="6">1.82 mM for xylohexaose</KM>
        <Vmax evidence="6">94.0 pmol/min/mg enzyme with xylohexaose as substrate</Vmax>
    </kinetics>
</comment>
<comment type="subcellular location">
    <subcellularLocation>
        <location evidence="1">Golgi apparatus membrane</location>
        <topology evidence="3">Single-pass type II membrane protein</topology>
    </subcellularLocation>
</comment>
<comment type="tissue specificity">
    <text evidence="6">Highly expressed in leaves. Expressed in roots, stems and inflorescences.</text>
</comment>
<comment type="similarity">
    <text evidence="9">Belongs to the PC-esterase family. TBL subfamily.</text>
</comment>
<evidence type="ECO:0000250" key="1">
    <source>
        <dbReference type="UniProtKB" id="Q2QYU2"/>
    </source>
</evidence>
<evidence type="ECO:0000250" key="2">
    <source>
        <dbReference type="UniProtKB" id="Q9LY46"/>
    </source>
</evidence>
<evidence type="ECO:0000255" key="3"/>
<evidence type="ECO:0000255" key="4">
    <source>
        <dbReference type="PROSITE-ProRule" id="PRU00498"/>
    </source>
</evidence>
<evidence type="ECO:0000256" key="5">
    <source>
        <dbReference type="SAM" id="MobiDB-lite"/>
    </source>
</evidence>
<evidence type="ECO:0000269" key="6">
    <source>
    </source>
</evidence>
<evidence type="ECO:0000303" key="7">
    <source>
    </source>
</evidence>
<evidence type="ECO:0000303" key="8">
    <source>
    </source>
</evidence>
<evidence type="ECO:0000305" key="9"/>
<evidence type="ECO:0000305" key="10">
    <source>
    </source>
</evidence>
<evidence type="ECO:0000312" key="11">
    <source>
        <dbReference type="EMBL" id="ABA95597.1"/>
    </source>
</evidence>
<evidence type="ECO:0000312" key="12">
    <source>
        <dbReference type="EMBL" id="BAT15478.1"/>
    </source>
</evidence>
<evidence type="ECO:0000312" key="13">
    <source>
        <dbReference type="EMBL" id="EEE52598.1"/>
    </source>
</evidence>